<gene>
    <name type="primary">EAF1</name>
    <name type="synonym">VID21</name>
    <name type="ORF">FGRAMPH1_01T18101</name>
    <name type="ORF">FGRRES_05512</name>
    <name type="ORF">FGSG_05512</name>
</gene>
<organism>
    <name type="scientific">Gibberella zeae (strain ATCC MYA-4620 / CBS 123657 / FGSC 9075 / NRRL 31084 / PH-1)</name>
    <name type="common">Wheat head blight fungus</name>
    <name type="synonym">Fusarium graminearum</name>
    <dbReference type="NCBI Taxonomy" id="229533"/>
    <lineage>
        <taxon>Eukaryota</taxon>
        <taxon>Fungi</taxon>
        <taxon>Dikarya</taxon>
        <taxon>Ascomycota</taxon>
        <taxon>Pezizomycotina</taxon>
        <taxon>Sordariomycetes</taxon>
        <taxon>Hypocreomycetidae</taxon>
        <taxon>Hypocreales</taxon>
        <taxon>Nectriaceae</taxon>
        <taxon>Fusarium</taxon>
    </lineage>
</organism>
<comment type="function">
    <text evidence="1">Component of the NuA4 histone acetyltransferase complex which is involved in transcriptional activation of selected genes principally by acetylation of nucleosomal histone H4 and H2A. The NuA4 complex is also involved in DNA repair (By similarity).</text>
</comment>
<comment type="subunit">
    <text evidence="1">Component of the NuA4 histone acetyltransferase complex.</text>
</comment>
<comment type="subcellular location">
    <subcellularLocation>
        <location evidence="5">Nucleus</location>
    </subcellularLocation>
</comment>
<comment type="similarity">
    <text evidence="5">Belongs to the EAF1 family.</text>
</comment>
<comment type="sequence caution" evidence="5">
    <conflict type="erroneous gene model prediction">
        <sequence resource="EMBL-CDS" id="ESU11483"/>
    </conflict>
</comment>
<proteinExistence type="inferred from homology"/>
<feature type="chain" id="PRO_0000065819" description="Chromatin modification-related protein EAF1">
    <location>
        <begin position="1"/>
        <end position="1542"/>
    </location>
</feature>
<feature type="domain" description="HSA" evidence="3">
    <location>
        <begin position="685"/>
        <end position="759"/>
    </location>
</feature>
<feature type="domain" description="Myb-like" evidence="2">
    <location>
        <begin position="955"/>
        <end position="1009"/>
    </location>
</feature>
<feature type="region of interest" description="Disordered" evidence="4">
    <location>
        <begin position="108"/>
        <end position="531"/>
    </location>
</feature>
<feature type="region of interest" description="Disordered" evidence="4">
    <location>
        <begin position="550"/>
        <end position="611"/>
    </location>
</feature>
<feature type="region of interest" description="Disordered" evidence="4">
    <location>
        <begin position="871"/>
        <end position="906"/>
    </location>
</feature>
<feature type="region of interest" description="Disordered" evidence="4">
    <location>
        <begin position="1088"/>
        <end position="1127"/>
    </location>
</feature>
<feature type="region of interest" description="Disordered" evidence="4">
    <location>
        <begin position="1220"/>
        <end position="1244"/>
    </location>
</feature>
<feature type="region of interest" description="Disordered" evidence="4">
    <location>
        <begin position="1292"/>
        <end position="1324"/>
    </location>
</feature>
<feature type="region of interest" description="Disordered" evidence="4">
    <location>
        <begin position="1462"/>
        <end position="1542"/>
    </location>
</feature>
<feature type="compositionally biased region" description="Polar residues" evidence="4">
    <location>
        <begin position="108"/>
        <end position="118"/>
    </location>
</feature>
<feature type="compositionally biased region" description="Polar residues" evidence="4">
    <location>
        <begin position="126"/>
        <end position="146"/>
    </location>
</feature>
<feature type="compositionally biased region" description="Low complexity" evidence="4">
    <location>
        <begin position="147"/>
        <end position="161"/>
    </location>
</feature>
<feature type="compositionally biased region" description="Polar residues" evidence="4">
    <location>
        <begin position="185"/>
        <end position="203"/>
    </location>
</feature>
<feature type="compositionally biased region" description="Polar residues" evidence="4">
    <location>
        <begin position="251"/>
        <end position="261"/>
    </location>
</feature>
<feature type="compositionally biased region" description="Polar residues" evidence="4">
    <location>
        <begin position="275"/>
        <end position="285"/>
    </location>
</feature>
<feature type="compositionally biased region" description="Basic and acidic residues" evidence="4">
    <location>
        <begin position="288"/>
        <end position="302"/>
    </location>
</feature>
<feature type="compositionally biased region" description="Basic and acidic residues" evidence="4">
    <location>
        <begin position="309"/>
        <end position="348"/>
    </location>
</feature>
<feature type="compositionally biased region" description="Low complexity" evidence="4">
    <location>
        <begin position="366"/>
        <end position="380"/>
    </location>
</feature>
<feature type="compositionally biased region" description="Acidic residues" evidence="4">
    <location>
        <begin position="450"/>
        <end position="463"/>
    </location>
</feature>
<feature type="compositionally biased region" description="Polar residues" evidence="4">
    <location>
        <begin position="550"/>
        <end position="559"/>
    </location>
</feature>
<feature type="compositionally biased region" description="Low complexity" evidence="4">
    <location>
        <begin position="560"/>
        <end position="570"/>
    </location>
</feature>
<feature type="compositionally biased region" description="Polar residues" evidence="4">
    <location>
        <begin position="580"/>
        <end position="591"/>
    </location>
</feature>
<feature type="compositionally biased region" description="Polar residues" evidence="4">
    <location>
        <begin position="1094"/>
        <end position="1119"/>
    </location>
</feature>
<feature type="compositionally biased region" description="Gly residues" evidence="4">
    <location>
        <begin position="1303"/>
        <end position="1312"/>
    </location>
</feature>
<feature type="compositionally biased region" description="Low complexity" evidence="4">
    <location>
        <begin position="1463"/>
        <end position="1542"/>
    </location>
</feature>
<keyword id="KW-0010">Activator</keyword>
<keyword id="KW-0156">Chromatin regulator</keyword>
<keyword id="KW-0227">DNA damage</keyword>
<keyword id="KW-0234">DNA repair</keyword>
<keyword id="KW-0539">Nucleus</keyword>
<keyword id="KW-1185">Reference proteome</keyword>
<keyword id="KW-0804">Transcription</keyword>
<keyword id="KW-0805">Transcription regulation</keyword>
<sequence>MTEVGAADLSRLLQSKRNECSSIVTSRKRKLRELFVVATQSEGLPHPVLTNPDAPTTTPAEWQFLQANDINQSKTLNEASIPTRPTFSLEVLKKSLAKSIFIANESVPKQTSENSNKSHVTDAQDEQQSNRASLSTKSDAAATSTRPNTPETSTESATTANPVPPPAKNTQAVLPPADAIEKPIPTTSPDVPASTGANANSITNEEDRSDPNEVASVPRQPQVTFETGTKGEHVETGTSSVKSGHGVGDSAVTTGVPSTVKPSADVTRSADALSSPGSTAQSATTPAVHDDASTDTSPEHEGPQYVEPAEQKKIEDGTHERDTDKYHQSHQDGDIRAPSTKDLEDRVLEAPPDSAEAQLLQESIRSNVAAENEAALNSESTSQEADTAISAPVSEDVNMSDVDDRVVKAAPTVGEKVEEKRAQQILDTDAKSALATGAPAEISGSKEIPDSQEEAPEQMDVDAPEPKASTESQIGAPISLEKLDAADTGPSSPTPAHIAEVATPPEPVRQNSPPKAERAVTRVSSGAMRPKSVSEIVGVTPRQTPTLEHISTNKSTNHQLTPLTSTPKSPTLRHRHISAHQRQASRSQPSTVVFGKQSKKGEEKSMVTSQHDTILPTEDYYTPLFVQGFAGSSSWMQPIEKILYTANKTVTTPDANLAIQDHQACKVLRRVYHLQQHDKWSLRQPKRCPEPTRPPSHWDVVLQEMKWMRTDFREERKWKRAVAKNLAYACAEWHEATPEERKTLQVQAVVPPKMKPASDVAMVDAEGTNHLTPDLVSSEDVESIDNLDDLIEDFPETIAPSAIFNLQDEDVVFGLRRTAAADQLLEELPMFGAPLQVPKFDLTGPEWDPDAHWRRPALPLSKYVEGHMKLVSDGPPRKRSRYNYQNEDSDDEGEAGFVSSDSTPSLPLPSATDEVALFNPEMKHIRDRLYVGHQFRPPSEYPMPSQSFFECRSPSQWTIAEDDELRSLVREHSYNWSLISSILAPRSIFNSGAERRTPWECFERWINLEGLPADMSKTQYFKAYMGRINTAQNMINIQNQAMAQQQVNQANGAVTPGRRRHQSIPFRVERRRNQKHLTMLDAMRKLAKKRETTAQKQQHTASQNAANKKTNESASQRPTKTPGEYSRLRYERDQALAEKMAQFASRQEAQRRAVLQARAQGQAAQMAAGTPAAVQAGQNSAQAAAAAAAAAAAANGMNGVGRVNVPNQLAAAAAAATGQARPRMPMQSPAPASMGGVPAHMASGLVPPNQMNSVQQAQMQAMQAMQGQHNRMPMPNPPPDVSLMMRAQRISEQQRAAQMHAQGGPGTPGQGAVGAQQSPPAQMRNAMNGVNGINSNPMNQQSFLNNAQAMMAQFNQGNLSSPQANGLHMPSGPAGSIAPRPQTQLPAAIQAQLNQLEAQYRAKNSSLTSEQARQMATEHLTRLMMAQRSAMNAAAGTAGGQGGLAGSIAATTSPHQYAALLRQQQQQQASAAAGSPGQQHQQPHQAQHQPQQQQSQQQQAQAKQQQPQQQVQAHAHAQAQHQAQQQQQQQRQASGSATPSAG</sequence>
<protein>
    <recommendedName>
        <fullName>Chromatin modification-related protein EAF1</fullName>
    </recommendedName>
    <alternativeName>
        <fullName>ESA1-associated factor 1</fullName>
    </alternativeName>
    <alternativeName>
        <fullName>Vacuolar import and degradation protein 21</fullName>
    </alternativeName>
</protein>
<accession>Q4IB96</accession>
<accession>A0A098E1Z8</accession>
<accession>A0A0E0SMF9</accession>
<accession>A0A1C3YJP3</accession>
<accession>V6RA16</accession>
<name>EAF1_GIBZE</name>
<dbReference type="EMBL" id="DS231665">
    <property type="protein sequence ID" value="ESU11483.1"/>
    <property type="status" value="ALT_SEQ"/>
    <property type="molecule type" value="Genomic_DNA"/>
</dbReference>
<dbReference type="EMBL" id="HG970334">
    <property type="protein sequence ID" value="SCB64767.1"/>
    <property type="molecule type" value="Genomic_DNA"/>
</dbReference>
<dbReference type="RefSeq" id="XP_011324059.1">
    <property type="nucleotide sequence ID" value="XM_011325757.1"/>
</dbReference>
<dbReference type="STRING" id="229533.Q4IB96"/>
<dbReference type="GeneID" id="23552691"/>
<dbReference type="KEGG" id="fgr:FGSG_05512"/>
<dbReference type="VEuPathDB" id="FungiDB:FGRAMPH1_01G18101"/>
<dbReference type="eggNOG" id="ENOG502RGMX">
    <property type="taxonomic scope" value="Eukaryota"/>
</dbReference>
<dbReference type="HOGENOM" id="CLU_001331_0_0_1"/>
<dbReference type="InParanoid" id="Q4IB96"/>
<dbReference type="OrthoDB" id="128561at110618"/>
<dbReference type="PHI-base" id="PHI:1546"/>
<dbReference type="Proteomes" id="UP000070720">
    <property type="component" value="Chromosome 3"/>
</dbReference>
<dbReference type="GO" id="GO:0035267">
    <property type="term" value="C:NuA4 histone acetyltransferase complex"/>
    <property type="evidence" value="ECO:0007669"/>
    <property type="project" value="TreeGrafter"/>
</dbReference>
<dbReference type="GO" id="GO:0005634">
    <property type="term" value="C:nucleus"/>
    <property type="evidence" value="ECO:0007669"/>
    <property type="project" value="UniProtKB-SubCell"/>
</dbReference>
<dbReference type="GO" id="GO:0003682">
    <property type="term" value="F:chromatin binding"/>
    <property type="evidence" value="ECO:0007669"/>
    <property type="project" value="TreeGrafter"/>
</dbReference>
<dbReference type="GO" id="GO:0006325">
    <property type="term" value="P:chromatin organization"/>
    <property type="evidence" value="ECO:0007669"/>
    <property type="project" value="UniProtKB-KW"/>
</dbReference>
<dbReference type="GO" id="GO:0006281">
    <property type="term" value="P:DNA repair"/>
    <property type="evidence" value="ECO:0007669"/>
    <property type="project" value="UniProtKB-KW"/>
</dbReference>
<dbReference type="CDD" id="cd00167">
    <property type="entry name" value="SANT"/>
    <property type="match status" value="1"/>
</dbReference>
<dbReference type="Gene3D" id="1.10.10.60">
    <property type="entry name" value="Homeodomain-like"/>
    <property type="match status" value="1"/>
</dbReference>
<dbReference type="InterPro" id="IPR009057">
    <property type="entry name" value="Homeodomain-like_sf"/>
</dbReference>
<dbReference type="InterPro" id="IPR014012">
    <property type="entry name" value="HSA_dom"/>
</dbReference>
<dbReference type="InterPro" id="IPR001005">
    <property type="entry name" value="SANT/Myb"/>
</dbReference>
<dbReference type="PANTHER" id="PTHR46459:SF1">
    <property type="entry name" value="E1A-BINDING PROTEIN P400"/>
    <property type="match status" value="1"/>
</dbReference>
<dbReference type="PANTHER" id="PTHR46459">
    <property type="entry name" value="E1A-BINDING PROTEIN P400-RELATED"/>
    <property type="match status" value="1"/>
</dbReference>
<dbReference type="Pfam" id="PF07529">
    <property type="entry name" value="HSA"/>
    <property type="match status" value="1"/>
</dbReference>
<dbReference type="Pfam" id="PF13921">
    <property type="entry name" value="Myb_DNA-bind_6"/>
    <property type="match status" value="1"/>
</dbReference>
<dbReference type="SMART" id="SM00573">
    <property type="entry name" value="HSA"/>
    <property type="match status" value="1"/>
</dbReference>
<dbReference type="SMART" id="SM00717">
    <property type="entry name" value="SANT"/>
    <property type="match status" value="1"/>
</dbReference>
<dbReference type="SUPFAM" id="SSF46689">
    <property type="entry name" value="Homeodomain-like"/>
    <property type="match status" value="1"/>
</dbReference>
<dbReference type="PROSITE" id="PS51204">
    <property type="entry name" value="HSA"/>
    <property type="match status" value="1"/>
</dbReference>
<dbReference type="PROSITE" id="PS50090">
    <property type="entry name" value="MYB_LIKE"/>
    <property type="match status" value="1"/>
</dbReference>
<reference key="1">
    <citation type="journal article" date="2007" name="Science">
        <title>The Fusarium graminearum genome reveals a link between localized polymorphism and pathogen specialization.</title>
        <authorList>
            <person name="Cuomo C.A."/>
            <person name="Gueldener U."/>
            <person name="Xu J.-R."/>
            <person name="Trail F."/>
            <person name="Turgeon B.G."/>
            <person name="Di Pietro A."/>
            <person name="Walton J.D."/>
            <person name="Ma L.-J."/>
            <person name="Baker S.E."/>
            <person name="Rep M."/>
            <person name="Adam G."/>
            <person name="Antoniw J."/>
            <person name="Baldwin T."/>
            <person name="Calvo S.E."/>
            <person name="Chang Y.-L."/>
            <person name="DeCaprio D."/>
            <person name="Gale L.R."/>
            <person name="Gnerre S."/>
            <person name="Goswami R.S."/>
            <person name="Hammond-Kosack K."/>
            <person name="Harris L.J."/>
            <person name="Hilburn K."/>
            <person name="Kennell J.C."/>
            <person name="Kroken S."/>
            <person name="Magnuson J.K."/>
            <person name="Mannhaupt G."/>
            <person name="Mauceli E.W."/>
            <person name="Mewes H.-W."/>
            <person name="Mitterbauer R."/>
            <person name="Muehlbauer G."/>
            <person name="Muensterkoetter M."/>
            <person name="Nelson D."/>
            <person name="O'Donnell K."/>
            <person name="Ouellet T."/>
            <person name="Qi W."/>
            <person name="Quesneville H."/>
            <person name="Roncero M.I.G."/>
            <person name="Seong K.-Y."/>
            <person name="Tetko I.V."/>
            <person name="Urban M."/>
            <person name="Waalwijk C."/>
            <person name="Ward T.J."/>
            <person name="Yao J."/>
            <person name="Birren B.W."/>
            <person name="Kistler H.C."/>
        </authorList>
    </citation>
    <scope>NUCLEOTIDE SEQUENCE [LARGE SCALE GENOMIC DNA]</scope>
    <source>
        <strain>ATCC MYA-4620 / CBS 123657 / FGSC 9075 / NRRL 31084 / PH-1</strain>
    </source>
</reference>
<reference key="2">
    <citation type="journal article" date="2010" name="Nature">
        <title>Comparative genomics reveals mobile pathogenicity chromosomes in Fusarium.</title>
        <authorList>
            <person name="Ma L.-J."/>
            <person name="van der Does H.C."/>
            <person name="Borkovich K.A."/>
            <person name="Coleman J.J."/>
            <person name="Daboussi M.-J."/>
            <person name="Di Pietro A."/>
            <person name="Dufresne M."/>
            <person name="Freitag M."/>
            <person name="Grabherr M."/>
            <person name="Henrissat B."/>
            <person name="Houterman P.M."/>
            <person name="Kang S."/>
            <person name="Shim W.-B."/>
            <person name="Woloshuk C."/>
            <person name="Xie X."/>
            <person name="Xu J.-R."/>
            <person name="Antoniw J."/>
            <person name="Baker S.E."/>
            <person name="Bluhm B.H."/>
            <person name="Breakspear A."/>
            <person name="Brown D.W."/>
            <person name="Butchko R.A.E."/>
            <person name="Chapman S."/>
            <person name="Coulson R."/>
            <person name="Coutinho P.M."/>
            <person name="Danchin E.G.J."/>
            <person name="Diener A."/>
            <person name="Gale L.R."/>
            <person name="Gardiner D.M."/>
            <person name="Goff S."/>
            <person name="Hammond-Kosack K.E."/>
            <person name="Hilburn K."/>
            <person name="Hua-Van A."/>
            <person name="Jonkers W."/>
            <person name="Kazan K."/>
            <person name="Kodira C.D."/>
            <person name="Koehrsen M."/>
            <person name="Kumar L."/>
            <person name="Lee Y.-H."/>
            <person name="Li L."/>
            <person name="Manners J.M."/>
            <person name="Miranda-Saavedra D."/>
            <person name="Mukherjee M."/>
            <person name="Park G."/>
            <person name="Park J."/>
            <person name="Park S.-Y."/>
            <person name="Proctor R.H."/>
            <person name="Regev A."/>
            <person name="Ruiz-Roldan M.C."/>
            <person name="Sain D."/>
            <person name="Sakthikumar S."/>
            <person name="Sykes S."/>
            <person name="Schwartz D.C."/>
            <person name="Turgeon B.G."/>
            <person name="Wapinski I."/>
            <person name="Yoder O."/>
            <person name="Young S."/>
            <person name="Zeng Q."/>
            <person name="Zhou S."/>
            <person name="Galagan J."/>
            <person name="Cuomo C.A."/>
            <person name="Kistler H.C."/>
            <person name="Rep M."/>
        </authorList>
    </citation>
    <scope>GENOME REANNOTATION</scope>
    <source>
        <strain>ATCC MYA-4620 / CBS 123657 / FGSC 9075 / NRRL 31084 / PH-1</strain>
    </source>
</reference>
<reference key="3">
    <citation type="journal article" date="2015" name="BMC Genomics">
        <title>The completed genome sequence of the pathogenic ascomycete fungus Fusarium graminearum.</title>
        <authorList>
            <person name="King R."/>
            <person name="Urban M."/>
            <person name="Hammond-Kosack M.C.U."/>
            <person name="Hassani-Pak K."/>
            <person name="Hammond-Kosack K.E."/>
        </authorList>
    </citation>
    <scope>NUCLEOTIDE SEQUENCE [LARGE SCALE GENOMIC DNA]</scope>
    <source>
        <strain>ATCC MYA-4620 / CBS 123657 / FGSC 9075 / NRRL 31084 / PH-1</strain>
    </source>
</reference>
<evidence type="ECO:0000250" key="1"/>
<evidence type="ECO:0000255" key="2">
    <source>
        <dbReference type="PROSITE-ProRule" id="PRU00133"/>
    </source>
</evidence>
<evidence type="ECO:0000255" key="3">
    <source>
        <dbReference type="PROSITE-ProRule" id="PRU00549"/>
    </source>
</evidence>
<evidence type="ECO:0000256" key="4">
    <source>
        <dbReference type="SAM" id="MobiDB-lite"/>
    </source>
</evidence>
<evidence type="ECO:0000305" key="5"/>